<reference key="1">
    <citation type="journal article" date="2004" name="Nature">
        <title>Genome evolution in yeasts.</title>
        <authorList>
            <person name="Dujon B."/>
            <person name="Sherman D."/>
            <person name="Fischer G."/>
            <person name="Durrens P."/>
            <person name="Casaregola S."/>
            <person name="Lafontaine I."/>
            <person name="de Montigny J."/>
            <person name="Marck C."/>
            <person name="Neuveglise C."/>
            <person name="Talla E."/>
            <person name="Goffard N."/>
            <person name="Frangeul L."/>
            <person name="Aigle M."/>
            <person name="Anthouard V."/>
            <person name="Babour A."/>
            <person name="Barbe V."/>
            <person name="Barnay S."/>
            <person name="Blanchin S."/>
            <person name="Beckerich J.-M."/>
            <person name="Beyne E."/>
            <person name="Bleykasten C."/>
            <person name="Boisrame A."/>
            <person name="Boyer J."/>
            <person name="Cattolico L."/>
            <person name="Confanioleri F."/>
            <person name="de Daruvar A."/>
            <person name="Despons L."/>
            <person name="Fabre E."/>
            <person name="Fairhead C."/>
            <person name="Ferry-Dumazet H."/>
            <person name="Groppi A."/>
            <person name="Hantraye F."/>
            <person name="Hennequin C."/>
            <person name="Jauniaux N."/>
            <person name="Joyet P."/>
            <person name="Kachouri R."/>
            <person name="Kerrest A."/>
            <person name="Koszul R."/>
            <person name="Lemaire M."/>
            <person name="Lesur I."/>
            <person name="Ma L."/>
            <person name="Muller H."/>
            <person name="Nicaud J.-M."/>
            <person name="Nikolski M."/>
            <person name="Oztas S."/>
            <person name="Ozier-Kalogeropoulos O."/>
            <person name="Pellenz S."/>
            <person name="Potier S."/>
            <person name="Richard G.-F."/>
            <person name="Straub M.-L."/>
            <person name="Suleau A."/>
            <person name="Swennen D."/>
            <person name="Tekaia F."/>
            <person name="Wesolowski-Louvel M."/>
            <person name="Westhof E."/>
            <person name="Wirth B."/>
            <person name="Zeniou-Meyer M."/>
            <person name="Zivanovic Y."/>
            <person name="Bolotin-Fukuhara M."/>
            <person name="Thierry A."/>
            <person name="Bouchier C."/>
            <person name="Caudron B."/>
            <person name="Scarpelli C."/>
            <person name="Gaillardin C."/>
            <person name="Weissenbach J."/>
            <person name="Wincker P."/>
            <person name="Souciet J.-L."/>
        </authorList>
    </citation>
    <scope>NUCLEOTIDE SEQUENCE [LARGE SCALE GENOMIC DNA]</scope>
    <source>
        <strain>ATCC 2001 / BCRC 20586 / JCM 3761 / NBRC 0622 / NRRL Y-65 / CBS 138</strain>
    </source>
</reference>
<name>EME1_CANGA</name>
<gene>
    <name type="primary">EME1</name>
    <name type="ordered locus">CAGL0K12122g</name>
</gene>
<comment type="function">
    <text evidence="1">Interacts with MUS81 to form a DNA structure-specific endonuclease with substrate preference for branched DNA structures with a 5'-end at the branch nick. Typical substrates include 3'-flap structures, D-loops, replication forks and nicked Holliday junctions. May be required in mitosis for the processing of stalled or collapsed replication fork intermediates. May be required in meiosis for the repair of meiosis-specific double strand breaks subsequent to single-end invasion (SEI) (By similarity).</text>
</comment>
<comment type="cofactor">
    <cofactor evidence="1">
        <name>Mg(2+)</name>
        <dbReference type="ChEBI" id="CHEBI:18420"/>
    </cofactor>
</comment>
<comment type="subunit">
    <text evidence="1">Interacts with MUS81.</text>
</comment>
<comment type="subcellular location">
    <subcellularLocation>
        <location evidence="1">Nucleus</location>
    </subcellularLocation>
</comment>
<comment type="similarity">
    <text evidence="3">Belongs to the EME1/MMS4 family.</text>
</comment>
<evidence type="ECO:0000250" key="1"/>
<evidence type="ECO:0000256" key="2">
    <source>
        <dbReference type="SAM" id="MobiDB-lite"/>
    </source>
</evidence>
<evidence type="ECO:0000305" key="3"/>
<feature type="chain" id="PRO_0000223634" description="Crossover junction endonuclease EME1">
    <location>
        <begin position="1"/>
        <end position="580"/>
    </location>
</feature>
<feature type="region of interest" description="Disordered" evidence="2">
    <location>
        <begin position="53"/>
        <end position="72"/>
    </location>
</feature>
<feature type="region of interest" description="Disordered" evidence="2">
    <location>
        <begin position="103"/>
        <end position="155"/>
    </location>
</feature>
<feature type="compositionally biased region" description="Polar residues" evidence="2">
    <location>
        <begin position="55"/>
        <end position="72"/>
    </location>
</feature>
<feature type="compositionally biased region" description="Polar residues" evidence="2">
    <location>
        <begin position="122"/>
        <end position="136"/>
    </location>
</feature>
<accession>Q6FM02</accession>
<proteinExistence type="inferred from homology"/>
<keyword id="KW-0227">DNA damage</keyword>
<keyword id="KW-0233">DNA recombination</keyword>
<keyword id="KW-0234">DNA repair</keyword>
<keyword id="KW-0255">Endonuclease</keyword>
<keyword id="KW-0378">Hydrolase</keyword>
<keyword id="KW-0460">Magnesium</keyword>
<keyword id="KW-0469">Meiosis</keyword>
<keyword id="KW-0479">Metal-binding</keyword>
<keyword id="KW-0540">Nuclease</keyword>
<keyword id="KW-0539">Nucleus</keyword>
<keyword id="KW-1185">Reference proteome</keyword>
<sequence length="580" mass="66736">MPTTPVIEILDDSSLLDDSLIEEIISDNNDNVIHPTEIDESIEISIPYVNDKTAESNSTSLGNSQKESSLIVTQTASQRKRILDEILSDDLSISTDDFSLDAIPKQTSGRTRDSQKNDSALYESSQEKASIASSPNRLIKKSSSERHKKSQSIDSKDICIKSPTRKINLGVTESMQTDVLFEDNNFNNIECTQETDLSFSTATADTPTVGFKEITFKHKESTNEGLNSHNFSDSIFERQRLKQYITNIRDITETESQELYNKLIHTEKGLFNAVNQTPRDNFKAREDIIVDFSPSLLSFLDKQTEILKSILAPATIQKSIHDELPRIRFFRKCHSFYDLQHDFFFPSNYKIVEENTTILYFDSKEFFVKYKEDKRSLFEKLKEIERDNYEIILVLYDLAKFKRELEKIEETKYRSRVQSQIYDSQQSIQQNKVTTPQSDYGLKKFDVEQRLRYINREWGLKIHIVNSHNDFVHSLPNLCSIIGKQRMDPAIRYMRYAHLNVKSASDRKDTLKKTINEIGKVPDIKASAISDIYSSFQSLLHDFEAGSLKASSDGNYLMSEALEKRLHKIFTSTDPNEAVD</sequence>
<protein>
    <recommendedName>
        <fullName>Crossover junction endonuclease EME1</fullName>
        <ecNumber>3.1.22.-</ecNumber>
    </recommendedName>
</protein>
<organism>
    <name type="scientific">Candida glabrata (strain ATCC 2001 / BCRC 20586 / JCM 3761 / NBRC 0622 / NRRL Y-65 / CBS 138)</name>
    <name type="common">Yeast</name>
    <name type="synonym">Nakaseomyces glabratus</name>
    <dbReference type="NCBI Taxonomy" id="284593"/>
    <lineage>
        <taxon>Eukaryota</taxon>
        <taxon>Fungi</taxon>
        <taxon>Dikarya</taxon>
        <taxon>Ascomycota</taxon>
        <taxon>Saccharomycotina</taxon>
        <taxon>Saccharomycetes</taxon>
        <taxon>Saccharomycetales</taxon>
        <taxon>Saccharomycetaceae</taxon>
        <taxon>Nakaseomyces</taxon>
    </lineage>
</organism>
<dbReference type="EC" id="3.1.22.-"/>
<dbReference type="EMBL" id="CR380957">
    <property type="protein sequence ID" value="CAG61705.1"/>
    <property type="molecule type" value="Genomic_DNA"/>
</dbReference>
<dbReference type="RefSeq" id="XP_448742.1">
    <property type="nucleotide sequence ID" value="XM_448742.1"/>
</dbReference>
<dbReference type="FunCoup" id="Q6FM02">
    <property type="interactions" value="209"/>
</dbReference>
<dbReference type="STRING" id="284593.Q6FM02"/>
<dbReference type="EnsemblFungi" id="CAGL0K12122g-T">
    <property type="protein sequence ID" value="CAGL0K12122g-T-p1"/>
    <property type="gene ID" value="CAGL0K12122g"/>
</dbReference>
<dbReference type="KEGG" id="cgr:2889970"/>
<dbReference type="CGD" id="CAL0134259">
    <property type="gene designation" value="CAGL0K12122g"/>
</dbReference>
<dbReference type="VEuPathDB" id="FungiDB:CAGL0K12122g"/>
<dbReference type="eggNOG" id="ENOG502RY0Q">
    <property type="taxonomic scope" value="Eukaryota"/>
</dbReference>
<dbReference type="HOGENOM" id="CLU_023637_0_0_1"/>
<dbReference type="InParanoid" id="Q6FM02"/>
<dbReference type="Proteomes" id="UP000002428">
    <property type="component" value="Chromosome K"/>
</dbReference>
<dbReference type="GO" id="GO:0048476">
    <property type="term" value="C:Holliday junction resolvase complex"/>
    <property type="evidence" value="ECO:0007669"/>
    <property type="project" value="EnsemblFungi"/>
</dbReference>
<dbReference type="GO" id="GO:0005634">
    <property type="term" value="C:nucleus"/>
    <property type="evidence" value="ECO:0007669"/>
    <property type="project" value="UniProtKB-SubCell"/>
</dbReference>
<dbReference type="GO" id="GO:0008821">
    <property type="term" value="F:crossover junction DNA endonuclease activity"/>
    <property type="evidence" value="ECO:0007669"/>
    <property type="project" value="EnsemblFungi"/>
</dbReference>
<dbReference type="GO" id="GO:0003677">
    <property type="term" value="F:DNA binding"/>
    <property type="evidence" value="ECO:0007669"/>
    <property type="project" value="InterPro"/>
</dbReference>
<dbReference type="GO" id="GO:0046872">
    <property type="term" value="F:metal ion binding"/>
    <property type="evidence" value="ECO:0007669"/>
    <property type="project" value="UniProtKB-KW"/>
</dbReference>
<dbReference type="GO" id="GO:0006265">
    <property type="term" value="P:DNA topological change"/>
    <property type="evidence" value="ECO:0007669"/>
    <property type="project" value="EnsemblFungi"/>
</dbReference>
<dbReference type="GO" id="GO:0006302">
    <property type="term" value="P:double-strand break repair"/>
    <property type="evidence" value="ECO:0007669"/>
    <property type="project" value="TreeGrafter"/>
</dbReference>
<dbReference type="GO" id="GO:0031573">
    <property type="term" value="P:mitotic intra-S DNA damage checkpoint signaling"/>
    <property type="evidence" value="ECO:0007669"/>
    <property type="project" value="TreeGrafter"/>
</dbReference>
<dbReference type="GO" id="GO:0010520">
    <property type="term" value="P:regulation of reciprocal meiotic recombination"/>
    <property type="evidence" value="ECO:0007669"/>
    <property type="project" value="EnsemblFungi"/>
</dbReference>
<dbReference type="GO" id="GO:0031297">
    <property type="term" value="P:replication fork processing"/>
    <property type="evidence" value="ECO:0007669"/>
    <property type="project" value="TreeGrafter"/>
</dbReference>
<dbReference type="GO" id="GO:0000712">
    <property type="term" value="P:resolution of meiotic recombination intermediates"/>
    <property type="evidence" value="ECO:0007669"/>
    <property type="project" value="EnsemblFungi"/>
</dbReference>
<dbReference type="CDD" id="cd20085">
    <property type="entry name" value="XPF_nuclease_Mms4"/>
    <property type="match status" value="1"/>
</dbReference>
<dbReference type="InterPro" id="IPR006166">
    <property type="entry name" value="ERCC4_domain"/>
</dbReference>
<dbReference type="InterPro" id="IPR033310">
    <property type="entry name" value="Mms4/EME1/EME2"/>
</dbReference>
<dbReference type="InterPro" id="IPR047521">
    <property type="entry name" value="XPF_nuclease_EME1_ascomycetes"/>
</dbReference>
<dbReference type="PANTHER" id="PTHR21077:SF5">
    <property type="entry name" value="CROSSOVER JUNCTION ENDONUCLEASE MMS4"/>
    <property type="match status" value="1"/>
</dbReference>
<dbReference type="PANTHER" id="PTHR21077">
    <property type="entry name" value="EME1 PROTEIN"/>
    <property type="match status" value="1"/>
</dbReference>
<dbReference type="Pfam" id="PF02732">
    <property type="entry name" value="ERCC4"/>
    <property type="match status" value="1"/>
</dbReference>
<dbReference type="SMART" id="SM00891">
    <property type="entry name" value="ERCC4"/>
    <property type="match status" value="1"/>
</dbReference>